<accession>Q6AGR0</accession>
<dbReference type="EC" id="2.7.1.30" evidence="1"/>
<dbReference type="EMBL" id="AE016822">
    <property type="protein sequence ID" value="AAT88435.1"/>
    <property type="molecule type" value="Genomic_DNA"/>
</dbReference>
<dbReference type="RefSeq" id="WP_011185436.1">
    <property type="nucleotide sequence ID" value="NC_006087.1"/>
</dbReference>
<dbReference type="SMR" id="Q6AGR0"/>
<dbReference type="STRING" id="281090.Lxx04420"/>
<dbReference type="KEGG" id="lxx:Lxx04420"/>
<dbReference type="eggNOG" id="COG0554">
    <property type="taxonomic scope" value="Bacteria"/>
</dbReference>
<dbReference type="HOGENOM" id="CLU_009281_2_3_11"/>
<dbReference type="UniPathway" id="UPA00618">
    <property type="reaction ID" value="UER00672"/>
</dbReference>
<dbReference type="Proteomes" id="UP000001306">
    <property type="component" value="Chromosome"/>
</dbReference>
<dbReference type="GO" id="GO:0005829">
    <property type="term" value="C:cytosol"/>
    <property type="evidence" value="ECO:0007669"/>
    <property type="project" value="TreeGrafter"/>
</dbReference>
<dbReference type="GO" id="GO:0005524">
    <property type="term" value="F:ATP binding"/>
    <property type="evidence" value="ECO:0007669"/>
    <property type="project" value="UniProtKB-UniRule"/>
</dbReference>
<dbReference type="GO" id="GO:0004370">
    <property type="term" value="F:glycerol kinase activity"/>
    <property type="evidence" value="ECO:0000250"/>
    <property type="project" value="UniProtKB"/>
</dbReference>
<dbReference type="GO" id="GO:0019563">
    <property type="term" value="P:glycerol catabolic process"/>
    <property type="evidence" value="ECO:0007669"/>
    <property type="project" value="UniProtKB-UniRule"/>
</dbReference>
<dbReference type="GO" id="GO:0006071">
    <property type="term" value="P:glycerol metabolic process"/>
    <property type="evidence" value="ECO:0000250"/>
    <property type="project" value="UniProtKB"/>
</dbReference>
<dbReference type="GO" id="GO:0006072">
    <property type="term" value="P:glycerol-3-phosphate metabolic process"/>
    <property type="evidence" value="ECO:0007669"/>
    <property type="project" value="InterPro"/>
</dbReference>
<dbReference type="CDD" id="cd07769">
    <property type="entry name" value="ASKHA_NBD_FGGY_GK"/>
    <property type="match status" value="1"/>
</dbReference>
<dbReference type="FunFam" id="3.30.420.40:FF:000007">
    <property type="entry name" value="Glycerol kinase"/>
    <property type="match status" value="1"/>
</dbReference>
<dbReference type="FunFam" id="3.30.420.40:FF:000008">
    <property type="entry name" value="Glycerol kinase"/>
    <property type="match status" value="1"/>
</dbReference>
<dbReference type="Gene3D" id="3.30.420.40">
    <property type="match status" value="2"/>
</dbReference>
<dbReference type="HAMAP" id="MF_00186">
    <property type="entry name" value="Glycerol_kin"/>
    <property type="match status" value="1"/>
</dbReference>
<dbReference type="InterPro" id="IPR043129">
    <property type="entry name" value="ATPase_NBD"/>
</dbReference>
<dbReference type="InterPro" id="IPR000577">
    <property type="entry name" value="Carb_kinase_FGGY"/>
</dbReference>
<dbReference type="InterPro" id="IPR018483">
    <property type="entry name" value="Carb_kinase_FGGY_CS"/>
</dbReference>
<dbReference type="InterPro" id="IPR018485">
    <property type="entry name" value="FGGY_C"/>
</dbReference>
<dbReference type="InterPro" id="IPR018484">
    <property type="entry name" value="FGGY_N"/>
</dbReference>
<dbReference type="InterPro" id="IPR005999">
    <property type="entry name" value="Glycerol_kin"/>
</dbReference>
<dbReference type="NCBIfam" id="TIGR01311">
    <property type="entry name" value="glycerol_kin"/>
    <property type="match status" value="1"/>
</dbReference>
<dbReference type="NCBIfam" id="NF000756">
    <property type="entry name" value="PRK00047.1"/>
    <property type="match status" value="1"/>
</dbReference>
<dbReference type="PANTHER" id="PTHR10196:SF69">
    <property type="entry name" value="GLYCEROL KINASE"/>
    <property type="match status" value="1"/>
</dbReference>
<dbReference type="PANTHER" id="PTHR10196">
    <property type="entry name" value="SUGAR KINASE"/>
    <property type="match status" value="1"/>
</dbReference>
<dbReference type="Pfam" id="PF02782">
    <property type="entry name" value="FGGY_C"/>
    <property type="match status" value="1"/>
</dbReference>
<dbReference type="Pfam" id="PF00370">
    <property type="entry name" value="FGGY_N"/>
    <property type="match status" value="1"/>
</dbReference>
<dbReference type="PIRSF" id="PIRSF000538">
    <property type="entry name" value="GlpK"/>
    <property type="match status" value="1"/>
</dbReference>
<dbReference type="SUPFAM" id="SSF53067">
    <property type="entry name" value="Actin-like ATPase domain"/>
    <property type="match status" value="2"/>
</dbReference>
<dbReference type="PROSITE" id="PS00933">
    <property type="entry name" value="FGGY_KINASES_1"/>
    <property type="match status" value="1"/>
</dbReference>
<dbReference type="PROSITE" id="PS00445">
    <property type="entry name" value="FGGY_KINASES_2"/>
    <property type="match status" value="1"/>
</dbReference>
<sequence length="506" mass="55326">MAEYIVAIDQGTTSTRAIIFDKSGSIVSTGQLEHEQIFPKPGWVEHNPVEIWNNTREVIGQALSKADLTRHDIAAVGITNQRETAVVWDKNTGEPVYNAIVWQDTRTQPIVDRLAAEGGVERFKPIVGLPLATYFSGTKIVWILENVEGVRERAERGDLLFGTTESWVLWNLTGGTDGGVHATDVTNASRTLFMDLETLSWRDDILDVFGVPKSMLPEIKSSSEVYGAVESSSLLREVPVAGILGDQQAATFGQAAFDPGESKNTYGTGNFLIFNTGEEIVHSKNGLLTTLGYKLGDGKPHYALEGSIAVTGSLVQWLRDNLGVISSAPEIEELAQTVEDNGGAYFVPALSGLFAPYWRADARGALVGLTRYVNKGHIARAALEATAFQTREVLDAVNADSGVDLTELKVDGGMIANNTLMQFQADILGVPVVRPVVAETTALGAAYAAGLATGFWENLDDLRKNWKEDRRWEPKMDAAERDRQLRLWKKAVTKTFDWVDDDVRNG</sequence>
<evidence type="ECO:0000255" key="1">
    <source>
        <dbReference type="HAMAP-Rule" id="MF_00186"/>
    </source>
</evidence>
<reference key="1">
    <citation type="journal article" date="2004" name="Mol. Plant Microbe Interact.">
        <title>The genome sequence of the Gram-positive sugarcane pathogen Leifsonia xyli subsp. xyli.</title>
        <authorList>
            <person name="Monteiro-Vitorello C.B."/>
            <person name="Camargo L.E.A."/>
            <person name="Van Sluys M.A."/>
            <person name="Kitajima J.P."/>
            <person name="Truffi D."/>
            <person name="do Amaral A.M."/>
            <person name="Harakava R."/>
            <person name="de Oliveira J.C.F."/>
            <person name="Wood D."/>
            <person name="de Oliveira M.C."/>
            <person name="Miyaki C.Y."/>
            <person name="Takita M.A."/>
            <person name="da Silva A.C.R."/>
            <person name="Furlan L.R."/>
            <person name="Carraro D.M."/>
            <person name="Camarotte G."/>
            <person name="Almeida N.F. Jr."/>
            <person name="Carrer H."/>
            <person name="Coutinho L.L."/>
            <person name="El-Dorry H.A."/>
            <person name="Ferro M.I.T."/>
            <person name="Gagliardi P.R."/>
            <person name="Giglioti E."/>
            <person name="Goldman M.H.S."/>
            <person name="Goldman G.H."/>
            <person name="Kimura E.T."/>
            <person name="Ferro E.S."/>
            <person name="Kuramae E.E."/>
            <person name="Lemos E.G.M."/>
            <person name="Lemos M.V.F."/>
            <person name="Mauro S.M.Z."/>
            <person name="Machado M.A."/>
            <person name="Marino C.L."/>
            <person name="Menck C.F."/>
            <person name="Nunes L.R."/>
            <person name="Oliveira R.C."/>
            <person name="Pereira G.G."/>
            <person name="Siqueira W."/>
            <person name="de Souza A.A."/>
            <person name="Tsai S.M."/>
            <person name="Zanca A.S."/>
            <person name="Simpson A.J.G."/>
            <person name="Brumbley S.M."/>
            <person name="Setubal J.C."/>
        </authorList>
    </citation>
    <scope>NUCLEOTIDE SEQUENCE [LARGE SCALE GENOMIC DNA]</scope>
    <source>
        <strain>CTCB07</strain>
    </source>
</reference>
<keyword id="KW-0067">ATP-binding</keyword>
<keyword id="KW-0319">Glycerol metabolism</keyword>
<keyword id="KW-0418">Kinase</keyword>
<keyword id="KW-0547">Nucleotide-binding</keyword>
<keyword id="KW-1185">Reference proteome</keyword>
<keyword id="KW-0808">Transferase</keyword>
<comment type="function">
    <text evidence="1">Key enzyme in the regulation of glycerol uptake and metabolism. Catalyzes the phosphorylation of glycerol to yield sn-glycerol 3-phosphate.</text>
</comment>
<comment type="catalytic activity">
    <reaction evidence="1">
        <text>glycerol + ATP = sn-glycerol 3-phosphate + ADP + H(+)</text>
        <dbReference type="Rhea" id="RHEA:21644"/>
        <dbReference type="ChEBI" id="CHEBI:15378"/>
        <dbReference type="ChEBI" id="CHEBI:17754"/>
        <dbReference type="ChEBI" id="CHEBI:30616"/>
        <dbReference type="ChEBI" id="CHEBI:57597"/>
        <dbReference type="ChEBI" id="CHEBI:456216"/>
        <dbReference type="EC" id="2.7.1.30"/>
    </reaction>
</comment>
<comment type="activity regulation">
    <text evidence="1">Inhibited by fructose 1,6-bisphosphate (FBP).</text>
</comment>
<comment type="pathway">
    <text evidence="1">Polyol metabolism; glycerol degradation via glycerol kinase pathway; sn-glycerol 3-phosphate from glycerol: step 1/1.</text>
</comment>
<comment type="similarity">
    <text evidence="1">Belongs to the FGGY kinase family.</text>
</comment>
<feature type="chain" id="PRO_0000059462" description="Glycerol kinase">
    <location>
        <begin position="1"/>
        <end position="506"/>
    </location>
</feature>
<feature type="binding site" evidence="1">
    <location>
        <position position="12"/>
    </location>
    <ligand>
        <name>ADP</name>
        <dbReference type="ChEBI" id="CHEBI:456216"/>
    </ligand>
</feature>
<feature type="binding site" evidence="1">
    <location>
        <position position="12"/>
    </location>
    <ligand>
        <name>ATP</name>
        <dbReference type="ChEBI" id="CHEBI:30616"/>
    </ligand>
</feature>
<feature type="binding site" evidence="1">
    <location>
        <position position="12"/>
    </location>
    <ligand>
        <name>sn-glycerol 3-phosphate</name>
        <dbReference type="ChEBI" id="CHEBI:57597"/>
    </ligand>
</feature>
<feature type="binding site" evidence="1">
    <location>
        <position position="13"/>
    </location>
    <ligand>
        <name>ATP</name>
        <dbReference type="ChEBI" id="CHEBI:30616"/>
    </ligand>
</feature>
<feature type="binding site" evidence="1">
    <location>
        <position position="14"/>
    </location>
    <ligand>
        <name>ATP</name>
        <dbReference type="ChEBI" id="CHEBI:30616"/>
    </ligand>
</feature>
<feature type="binding site" evidence="1">
    <location>
        <position position="16"/>
    </location>
    <ligand>
        <name>ADP</name>
        <dbReference type="ChEBI" id="CHEBI:456216"/>
    </ligand>
</feature>
<feature type="binding site" evidence="1">
    <location>
        <position position="82"/>
    </location>
    <ligand>
        <name>glycerol</name>
        <dbReference type="ChEBI" id="CHEBI:17754"/>
    </ligand>
</feature>
<feature type="binding site" evidence="1">
    <location>
        <position position="82"/>
    </location>
    <ligand>
        <name>sn-glycerol 3-phosphate</name>
        <dbReference type="ChEBI" id="CHEBI:57597"/>
    </ligand>
</feature>
<feature type="binding site" evidence="1">
    <location>
        <position position="83"/>
    </location>
    <ligand>
        <name>glycerol</name>
        <dbReference type="ChEBI" id="CHEBI:17754"/>
    </ligand>
</feature>
<feature type="binding site" evidence="1">
    <location>
        <position position="83"/>
    </location>
    <ligand>
        <name>sn-glycerol 3-phosphate</name>
        <dbReference type="ChEBI" id="CHEBI:57597"/>
    </ligand>
</feature>
<feature type="binding site" evidence="1">
    <location>
        <position position="134"/>
    </location>
    <ligand>
        <name>glycerol</name>
        <dbReference type="ChEBI" id="CHEBI:17754"/>
    </ligand>
</feature>
<feature type="binding site" evidence="1">
    <location>
        <position position="134"/>
    </location>
    <ligand>
        <name>sn-glycerol 3-phosphate</name>
        <dbReference type="ChEBI" id="CHEBI:57597"/>
    </ligand>
</feature>
<feature type="binding site" evidence="1">
    <location>
        <position position="246"/>
    </location>
    <ligand>
        <name>glycerol</name>
        <dbReference type="ChEBI" id="CHEBI:17754"/>
    </ligand>
</feature>
<feature type="binding site" evidence="1">
    <location>
        <position position="246"/>
    </location>
    <ligand>
        <name>sn-glycerol 3-phosphate</name>
        <dbReference type="ChEBI" id="CHEBI:57597"/>
    </ligand>
</feature>
<feature type="binding site" evidence="1">
    <location>
        <position position="247"/>
    </location>
    <ligand>
        <name>glycerol</name>
        <dbReference type="ChEBI" id="CHEBI:17754"/>
    </ligand>
</feature>
<feature type="binding site" evidence="1">
    <location>
        <position position="268"/>
    </location>
    <ligand>
        <name>ADP</name>
        <dbReference type="ChEBI" id="CHEBI:456216"/>
    </ligand>
</feature>
<feature type="binding site" evidence="1">
    <location>
        <position position="268"/>
    </location>
    <ligand>
        <name>ATP</name>
        <dbReference type="ChEBI" id="CHEBI:30616"/>
    </ligand>
</feature>
<feature type="binding site" evidence="1">
    <location>
        <position position="312"/>
    </location>
    <ligand>
        <name>ADP</name>
        <dbReference type="ChEBI" id="CHEBI:456216"/>
    </ligand>
</feature>
<feature type="binding site" evidence="1">
    <location>
        <position position="312"/>
    </location>
    <ligand>
        <name>ATP</name>
        <dbReference type="ChEBI" id="CHEBI:30616"/>
    </ligand>
</feature>
<feature type="binding site" evidence="1">
    <location>
        <position position="316"/>
    </location>
    <ligand>
        <name>ATP</name>
        <dbReference type="ChEBI" id="CHEBI:30616"/>
    </ligand>
</feature>
<feature type="binding site" evidence="1">
    <location>
        <position position="413"/>
    </location>
    <ligand>
        <name>ADP</name>
        <dbReference type="ChEBI" id="CHEBI:456216"/>
    </ligand>
</feature>
<feature type="binding site" evidence="1">
    <location>
        <position position="413"/>
    </location>
    <ligand>
        <name>ATP</name>
        <dbReference type="ChEBI" id="CHEBI:30616"/>
    </ligand>
</feature>
<feature type="binding site" evidence="1">
    <location>
        <position position="417"/>
    </location>
    <ligand>
        <name>ADP</name>
        <dbReference type="ChEBI" id="CHEBI:456216"/>
    </ligand>
</feature>
<organism>
    <name type="scientific">Leifsonia xyli subsp. xyli (strain CTCB07)</name>
    <dbReference type="NCBI Taxonomy" id="281090"/>
    <lineage>
        <taxon>Bacteria</taxon>
        <taxon>Bacillati</taxon>
        <taxon>Actinomycetota</taxon>
        <taxon>Actinomycetes</taxon>
        <taxon>Micrococcales</taxon>
        <taxon>Microbacteriaceae</taxon>
        <taxon>Leifsonia</taxon>
    </lineage>
</organism>
<name>GLPK_LEIXX</name>
<proteinExistence type="inferred from homology"/>
<protein>
    <recommendedName>
        <fullName evidence="1">Glycerol kinase</fullName>
        <ecNumber evidence="1">2.7.1.30</ecNumber>
    </recommendedName>
    <alternativeName>
        <fullName evidence="1">ATP:glycerol 3-phosphotransferase</fullName>
    </alternativeName>
    <alternativeName>
        <fullName evidence="1">Glycerokinase</fullName>
        <shortName evidence="1">GK</shortName>
    </alternativeName>
</protein>
<gene>
    <name evidence="1" type="primary">glpK</name>
    <name type="ordered locus">Lxx04420</name>
</gene>